<sequence length="267" mass="29464">MYLELVKKNSVILDKDGNKVKEVELPFIFSFPVRKDIIRRVFLAEFTHSLQPKGRDPMAGKRTSAESFGINLGMARVPRVKNSGEAALAPNTVGGRLTFPPSVDKKLVEEVNDKEKQLAVISALSATADTVFVKARGHVFKDSVSFPIVVTDDIVSLKTASEVEEFLEKIGVYDDVKRVKERIRIRAGKGKMRGRKYKEPIGPLIIVHDSNSPIVKAARNIAGVDVVNAKDVSVIHLAPGAHPGRLTIYTETSIKILDERLSKRLVS</sequence>
<name>RL4_SACI4</name>
<protein>
    <recommendedName>
        <fullName evidence="1">Large ribosomal subunit protein uL4</fullName>
    </recommendedName>
    <alternativeName>
        <fullName evidence="2">50S ribosomal protein L4</fullName>
    </alternativeName>
</protein>
<keyword id="KW-0687">Ribonucleoprotein</keyword>
<keyword id="KW-0689">Ribosomal protein</keyword>
<keyword id="KW-0694">RNA-binding</keyword>
<keyword id="KW-0699">rRNA-binding</keyword>
<feature type="chain" id="PRO_1000214587" description="Large ribosomal subunit protein uL4">
    <location>
        <begin position="1"/>
        <end position="267"/>
    </location>
</feature>
<reference key="1">
    <citation type="journal article" date="2009" name="Proc. Natl. Acad. Sci. U.S.A.">
        <title>Biogeography of the Sulfolobus islandicus pan-genome.</title>
        <authorList>
            <person name="Reno M.L."/>
            <person name="Held N.L."/>
            <person name="Fields C.J."/>
            <person name="Burke P.V."/>
            <person name="Whitaker R.J."/>
        </authorList>
    </citation>
    <scope>NUCLEOTIDE SEQUENCE [LARGE SCALE GENOMIC DNA]</scope>
    <source>
        <strain>M.14.25 / Kamchatka #1</strain>
    </source>
</reference>
<proteinExistence type="inferred from homology"/>
<accession>C3MVH9</accession>
<gene>
    <name evidence="1" type="primary">rpl4</name>
    <name type="ordered locus">M1425_1421</name>
</gene>
<organism>
    <name type="scientific">Saccharolobus islandicus (strain M.14.25 / Kamchatka #1)</name>
    <name type="common">Sulfolobus islandicus</name>
    <dbReference type="NCBI Taxonomy" id="427317"/>
    <lineage>
        <taxon>Archaea</taxon>
        <taxon>Thermoproteota</taxon>
        <taxon>Thermoprotei</taxon>
        <taxon>Sulfolobales</taxon>
        <taxon>Sulfolobaceae</taxon>
        <taxon>Saccharolobus</taxon>
    </lineage>
</organism>
<comment type="function">
    <text evidence="1">One of the primary rRNA binding proteins, this protein initially binds near the 5'-end of the 23S rRNA. It is important during the early stages of 50S assembly. It makes multiple contacts with different domains of the 23S rRNA in the assembled 50S subunit and ribosome.</text>
</comment>
<comment type="function">
    <text evidence="1">Forms part of the polypeptide exit tunnel.</text>
</comment>
<comment type="subunit">
    <text evidence="1">Part of the 50S ribosomal subunit.</text>
</comment>
<comment type="similarity">
    <text evidence="1">Belongs to the universal ribosomal protein uL4 family.</text>
</comment>
<dbReference type="EMBL" id="CP001400">
    <property type="protein sequence ID" value="ACP38174.1"/>
    <property type="molecule type" value="Genomic_DNA"/>
</dbReference>
<dbReference type="SMR" id="C3MVH9"/>
<dbReference type="KEGG" id="sia:M1425_1421"/>
<dbReference type="HOGENOM" id="CLU_026535_0_0_2"/>
<dbReference type="Proteomes" id="UP000001350">
    <property type="component" value="Chromosome"/>
</dbReference>
<dbReference type="GO" id="GO:1990904">
    <property type="term" value="C:ribonucleoprotein complex"/>
    <property type="evidence" value="ECO:0007669"/>
    <property type="project" value="UniProtKB-KW"/>
</dbReference>
<dbReference type="GO" id="GO:0005840">
    <property type="term" value="C:ribosome"/>
    <property type="evidence" value="ECO:0007669"/>
    <property type="project" value="UniProtKB-KW"/>
</dbReference>
<dbReference type="GO" id="GO:0019843">
    <property type="term" value="F:rRNA binding"/>
    <property type="evidence" value="ECO:0007669"/>
    <property type="project" value="UniProtKB-UniRule"/>
</dbReference>
<dbReference type="GO" id="GO:0003735">
    <property type="term" value="F:structural constituent of ribosome"/>
    <property type="evidence" value="ECO:0007669"/>
    <property type="project" value="InterPro"/>
</dbReference>
<dbReference type="GO" id="GO:0006412">
    <property type="term" value="P:translation"/>
    <property type="evidence" value="ECO:0007669"/>
    <property type="project" value="UniProtKB-UniRule"/>
</dbReference>
<dbReference type="FunFam" id="3.40.1370.10:FF:000011">
    <property type="entry name" value="50S ribosomal protein L4"/>
    <property type="match status" value="1"/>
</dbReference>
<dbReference type="Gene3D" id="3.40.1370.10">
    <property type="match status" value="1"/>
</dbReference>
<dbReference type="HAMAP" id="MF_01328_A">
    <property type="entry name" value="Ribosomal_uL4_A"/>
    <property type="match status" value="1"/>
</dbReference>
<dbReference type="InterPro" id="IPR002136">
    <property type="entry name" value="Ribosomal_uL4"/>
</dbReference>
<dbReference type="InterPro" id="IPR023574">
    <property type="entry name" value="Ribosomal_uL4_dom_sf"/>
</dbReference>
<dbReference type="InterPro" id="IPR013000">
    <property type="entry name" value="Ribosomal_uL4_euk/arc_CS"/>
</dbReference>
<dbReference type="InterPro" id="IPR045240">
    <property type="entry name" value="Ribosomal_uL4_euk/arch"/>
</dbReference>
<dbReference type="InterPro" id="IPR019970">
    <property type="entry name" value="Ribosomall_uL4-arc"/>
</dbReference>
<dbReference type="NCBIfam" id="TIGR03672">
    <property type="entry name" value="rpl4p_arch"/>
    <property type="match status" value="1"/>
</dbReference>
<dbReference type="PANTHER" id="PTHR19431">
    <property type="entry name" value="60S RIBOSOMAL PROTEIN L4"/>
    <property type="match status" value="1"/>
</dbReference>
<dbReference type="Pfam" id="PF00573">
    <property type="entry name" value="Ribosomal_L4"/>
    <property type="match status" value="1"/>
</dbReference>
<dbReference type="SUPFAM" id="SSF52166">
    <property type="entry name" value="Ribosomal protein L4"/>
    <property type="match status" value="1"/>
</dbReference>
<dbReference type="PROSITE" id="PS00939">
    <property type="entry name" value="RIBOSOMAL_L1E"/>
    <property type="match status" value="1"/>
</dbReference>
<evidence type="ECO:0000255" key="1">
    <source>
        <dbReference type="HAMAP-Rule" id="MF_01328"/>
    </source>
</evidence>
<evidence type="ECO:0000305" key="2"/>